<organism>
    <name type="scientific">Saccharomyces cerevisiae (strain ATCC 204508 / S288c)</name>
    <name type="common">Baker's yeast</name>
    <dbReference type="NCBI Taxonomy" id="559292"/>
    <lineage>
        <taxon>Eukaryota</taxon>
        <taxon>Fungi</taxon>
        <taxon>Dikarya</taxon>
        <taxon>Ascomycota</taxon>
        <taxon>Saccharomycotina</taxon>
        <taxon>Saccharomycetes</taxon>
        <taxon>Saccharomycetales</taxon>
        <taxon>Saccharomycetaceae</taxon>
        <taxon>Saccharomyces</taxon>
    </lineage>
</organism>
<sequence length="222" mass="24896">MKFFPLLLLIGVVGYIMNVLFTTWLPTNYMFDPKTLNEICNSVISKHNAAEGLSTEDLLQDVRDALASHYGDEYINRYVKEEWVFNNAGGAMGQMIILHASVSEYLILFGTAVGTEGHTGVHFADDYFTILHGTQIAALPYATEAEVYTPGMTHHLKKGYAKQYSMPGGSFALELAQGWIPCMLPFGFLDTFSSTLDLYTLYRTVYLTARDMGKNLLQNKKF</sequence>
<accession>P32352</accession>
<accession>D6W027</accession>
<feature type="chain" id="PRO_0000087021" description="C-8 sterol isomerase ERG2">
    <location>
        <begin position="1"/>
        <end position="222"/>
    </location>
</feature>
<feature type="transmembrane region" description="Helical" evidence="1">
    <location>
        <begin position="3"/>
        <end position="23"/>
    </location>
</feature>
<dbReference type="EC" id="5.-.-.-" evidence="6"/>
<dbReference type="EMBL" id="M74037">
    <property type="protein sequence ID" value="AAA34593.1"/>
    <property type="molecule type" value="Genomic_DNA"/>
</dbReference>
<dbReference type="EMBL" id="Z48755">
    <property type="protein sequence ID" value="CAA88643.1"/>
    <property type="molecule type" value="Genomic_DNA"/>
</dbReference>
<dbReference type="EMBL" id="AY558122">
    <property type="protein sequence ID" value="AAS56448.1"/>
    <property type="molecule type" value="Genomic_DNA"/>
</dbReference>
<dbReference type="EMBL" id="BK006946">
    <property type="protein sequence ID" value="DAA10101.1"/>
    <property type="molecule type" value="Genomic_DNA"/>
</dbReference>
<dbReference type="PIR" id="JH0488">
    <property type="entry name" value="JH0488"/>
</dbReference>
<dbReference type="RefSeq" id="NP_013929.1">
    <property type="nucleotide sequence ID" value="NM_001182709.1"/>
</dbReference>
<dbReference type="SMR" id="P32352"/>
<dbReference type="BioGRID" id="35380">
    <property type="interactions" value="461"/>
</dbReference>
<dbReference type="DIP" id="DIP-5068N"/>
<dbReference type="FunCoup" id="P32352">
    <property type="interactions" value="195"/>
</dbReference>
<dbReference type="IntAct" id="P32352">
    <property type="interactions" value="16"/>
</dbReference>
<dbReference type="STRING" id="4932.YMR202W"/>
<dbReference type="BindingDB" id="P32352"/>
<dbReference type="ChEMBL" id="CHEMBL3224"/>
<dbReference type="DrugCentral" id="P32352"/>
<dbReference type="iPTMnet" id="P32352"/>
<dbReference type="PaxDb" id="4932-YMR202W"/>
<dbReference type="PeptideAtlas" id="P32352"/>
<dbReference type="TopDownProteomics" id="P32352"/>
<dbReference type="EnsemblFungi" id="YMR202W_mRNA">
    <property type="protein sequence ID" value="YMR202W"/>
    <property type="gene ID" value="YMR202W"/>
</dbReference>
<dbReference type="GeneID" id="855242"/>
<dbReference type="KEGG" id="sce:YMR202W"/>
<dbReference type="AGR" id="SGD:S000004815"/>
<dbReference type="SGD" id="S000004815">
    <property type="gene designation" value="ERG2"/>
</dbReference>
<dbReference type="VEuPathDB" id="FungiDB:YMR202W"/>
<dbReference type="eggNOG" id="KOG4143">
    <property type="taxonomic scope" value="Eukaryota"/>
</dbReference>
<dbReference type="HOGENOM" id="CLU_085469_0_0_1"/>
<dbReference type="InParanoid" id="P32352"/>
<dbReference type="OMA" id="AMYVIHA"/>
<dbReference type="OrthoDB" id="347124at2759"/>
<dbReference type="BioCyc" id="MetaCyc:YMR202W-MONOMER"/>
<dbReference type="BioCyc" id="YEAST:YMR202W-MONOMER"/>
<dbReference type="UniPathway" id="UPA00768">
    <property type="reaction ID" value="UER00761"/>
</dbReference>
<dbReference type="BioGRID-ORCS" id="855242">
    <property type="hits" value="7 hits in 10 CRISPR screens"/>
</dbReference>
<dbReference type="PRO" id="PR:P32352"/>
<dbReference type="Proteomes" id="UP000002311">
    <property type="component" value="Chromosome XIII"/>
</dbReference>
<dbReference type="RNAct" id="P32352">
    <property type="molecule type" value="protein"/>
</dbReference>
<dbReference type="GO" id="GO:0005783">
    <property type="term" value="C:endoplasmic reticulum"/>
    <property type="evidence" value="ECO:0007005"/>
    <property type="project" value="SGD"/>
</dbReference>
<dbReference type="GO" id="GO:0005789">
    <property type="term" value="C:endoplasmic reticulum membrane"/>
    <property type="evidence" value="ECO:0007669"/>
    <property type="project" value="UniProtKB-SubCell"/>
</dbReference>
<dbReference type="GO" id="GO:0000247">
    <property type="term" value="F:C-8 sterol isomerase activity"/>
    <property type="evidence" value="ECO:0000314"/>
    <property type="project" value="UniProt"/>
</dbReference>
<dbReference type="GO" id="GO:0006696">
    <property type="term" value="P:ergosterol biosynthetic process"/>
    <property type="evidence" value="ECO:0000314"/>
    <property type="project" value="UniProt"/>
</dbReference>
<dbReference type="InterPro" id="IPR006716">
    <property type="entry name" value="ERG2_sigma1_rcpt-like"/>
</dbReference>
<dbReference type="PANTHER" id="PTHR10868">
    <property type="entry name" value="SIGMA 1-TYPE OPIOID RECEPTOR-RELATED"/>
    <property type="match status" value="1"/>
</dbReference>
<dbReference type="PANTHER" id="PTHR10868:SF1">
    <property type="entry name" value="SIGMA NON-OPIOID INTRACELLULAR RECEPTOR 1"/>
    <property type="match status" value="1"/>
</dbReference>
<dbReference type="Pfam" id="PF04622">
    <property type="entry name" value="ERG2_Sigma1R"/>
    <property type="match status" value="1"/>
</dbReference>
<proteinExistence type="evidence at protein level"/>
<keyword id="KW-0256">Endoplasmic reticulum</keyword>
<keyword id="KW-0413">Isomerase</keyword>
<keyword id="KW-0444">Lipid biosynthesis</keyword>
<keyword id="KW-0443">Lipid metabolism</keyword>
<keyword id="KW-0472">Membrane</keyword>
<keyword id="KW-1185">Reference proteome</keyword>
<keyword id="KW-0752">Steroid biosynthesis</keyword>
<keyword id="KW-0753">Steroid metabolism</keyword>
<keyword id="KW-0756">Sterol biosynthesis</keyword>
<keyword id="KW-1207">Sterol metabolism</keyword>
<keyword id="KW-0812">Transmembrane</keyword>
<keyword id="KW-1133">Transmembrane helix</keyword>
<gene>
    <name evidence="8" type="primary">ERG2</name>
    <name type="ordered locus">YMR202W</name>
    <name type="ORF">YM8325.03</name>
</gene>
<protein>
    <recommendedName>
        <fullName evidence="8">C-8 sterol isomerase ERG2</fullName>
        <ecNumber evidence="6">5.-.-.-</ecNumber>
    </recommendedName>
    <alternativeName>
        <fullName evidence="8">Delta-8--delta-7 sterol isomerase ERG2</fullName>
    </alternativeName>
    <alternativeName>
        <fullName evidence="8">Ergosterol biosynthetic protein 2</fullName>
    </alternativeName>
</protein>
<comment type="function">
    <text evidence="6 7">C-8 sterol isomerase; part of the third module of ergosterol biosynthesis pathway that includes the late steps of the pathway (Ref.5). ERG2 catalyzes the reaction which results in unsaturation at C-7 in the B ring of sterols and thus converts fecosterol to episterol (Ref.5). The third module or late pathway involves the ergosterol synthesis itself through consecutive reactions that mainly occur in the endoplasmic reticulum (ER) membrane. Firstly, the squalene synthase ERG9 catalyzes the condensation of 2 farnesyl pyrophosphate moieties to form squalene, which is the precursor of all steroids. Squalene synthase is crucial for balancing the incorporation of farnesyl diphosphate (FPP) into sterol and nonsterol isoprene synthesis. Secondly, the squalene epoxidase ERG1 catalyzes the stereospecific oxidation of squalene to (S)-2,3-epoxysqualene, which is considered to be a rate-limiting enzyme in steroid biosynthesis. Then, the lanosterol synthase ERG7 catalyzes the cyclization of (S)-2,3 oxidosqualene to lanosterol, a reaction that forms the sterol core. In the next steps, lanosterol is transformed to zymosterol through a complex process involving various demethylation, reduction and desaturation reactions. The lanosterol 14-alpha-demethylase ERG11 (also known as CYP51) catalyzes C14-demethylation of lanosterol to produce 4,4'-dimethyl cholesta-8,14,24-triene-3-beta-ol, which is critical for ergosterol biosynthesis. The C-14 reductase ERG24 reduces the C14=C15 double bond of 4,4-dimethyl-cholesta-8,14,24-trienol to produce 4,4-dimethyl-cholesta-8,24-dienol. 4,4-dimethyl-cholesta-8,24-dienol is substrate of the C-4 demethylation complex ERG25-ERG26-ERG27 in which ERG25 catalyzes the three-step monooxygenation required for the demethylation of 4,4-dimethyl and 4alpha-methylsterols, ERG26 catalyzes the oxidative decarboxylation that results in a reduction of the 3-beta-hydroxy group at the C-3 carbon to an oxo group, and ERG27 is responsible for the reduction of the keto group on the C-3. ERG28 has a role as a scaffold to help anchor ERG25, ERG26 and ERG27 to the endoplasmic reticulum and ERG29 regulates the activity of the iron-containing C4-methylsterol oxidase ERG25. Then, the sterol 24-C-methyltransferase ERG6 catalyzes the methyl transfer from S-adenosyl-methionine to the C-24 of zymosterol to form fecosterol. The C-8 sterol isomerase ERG2 catalyzes the reaction which results in unsaturation at C-7 in the B ring of sterols and thus converts fecosterol to episterol. The sterol-C5-desaturase ERG3 then catalyzes the introduction of a C-5 double bond in the B ring to produce 5-dehydroepisterol. The C-22 sterol desaturase ERG5 further converts 5-dehydroepisterol into ergosta-5,7,22,24(28)-tetraen-3beta-ol by forming the C-22(23) double bond in the sterol side chain. Finally, ergosta-5,7,22,24(28)-tetraen-3beta-ol is substrate of the C-24(28) sterol reductase ERG4 to produce ergosterol (PubMed:32679672).</text>
</comment>
<comment type="catalytic activity">
    <reaction evidence="6">
        <text>fecosterol = episterol</text>
        <dbReference type="Rhea" id="RHEA:33435"/>
        <dbReference type="ChEBI" id="CHEBI:17038"/>
        <dbReference type="ChEBI" id="CHEBI:23929"/>
    </reaction>
    <physiologicalReaction direction="left-to-right" evidence="6">
        <dbReference type="Rhea" id="RHEA:33436"/>
    </physiologicalReaction>
</comment>
<comment type="activity regulation">
    <text evidence="6">Catalytic activity is inhibited by the morphilines tridemorph, fenpropimorph, and fenpropidin.</text>
</comment>
<comment type="pathway">
    <text evidence="6">Steroid metabolism; ergosterol biosynthesis; ergosterol from zymosterol: step 2/5.</text>
</comment>
<comment type="interaction">
    <interactant intactId="EBI-6550">
        <id>P32352</id>
    </interactant>
    <interactant intactId="EBI-6502">
        <id>P32462</id>
        <label>ERG24</label>
    </interactant>
    <organismsDiffer>false</organismsDiffer>
    <experiments>3</experiments>
</comment>
<comment type="subcellular location">
    <subcellularLocation>
        <location evidence="4">Endoplasmic reticulum membrane</location>
        <topology evidence="1">Single-pass membrane protein</topology>
    </subcellularLocation>
</comment>
<comment type="induction">
    <text evidence="2">Expression is increased during ergosterol starvation, during anaerobic growth or in the presence of SR31747A, a sterol isomerase inhibitor (PubMed:10734216). Exogenously-supplied zymosterol is entirely transformed into ergosterol, which represses ERG2 expression (PubMed:10734216). However, exogenously-supplied ergosterol does not affect ERG2 expression (PubMed:10734216).</text>
</comment>
<comment type="disruption phenotype">
    <text evidence="5">Abolishes the production of ergosterol.</text>
</comment>
<comment type="miscellaneous">
    <text evidence="3">Present with 2640 molecules/cell in log phase SD medium.</text>
</comment>
<comment type="similarity">
    <text evidence="9">Belongs to the ERG2 family.</text>
</comment>
<evidence type="ECO:0000255" key="1"/>
<evidence type="ECO:0000269" key="2">
    <source>
    </source>
</evidence>
<evidence type="ECO:0000269" key="3">
    <source>
    </source>
</evidence>
<evidence type="ECO:0000269" key="4">
    <source>
    </source>
</evidence>
<evidence type="ECO:0000269" key="5">
    <source>
    </source>
</evidence>
<evidence type="ECO:0000269" key="6">
    <source ref="5"/>
</evidence>
<evidence type="ECO:0000303" key="7">
    <source>
    </source>
</evidence>
<evidence type="ECO:0000303" key="8">
    <source ref="5"/>
</evidence>
<evidence type="ECO:0000305" key="9"/>
<name>ERG2_YEAST</name>
<reference key="1">
    <citation type="journal article" date="1991" name="Gene">
        <title>Nucleotide sequence of the gene encoding yeast C-8 sterol isomerase.</title>
        <authorList>
            <person name="Arthington B.A."/>
            <person name="Hoskins J.A."/>
            <person name="Skatrud P.L."/>
            <person name="Bard M."/>
        </authorList>
    </citation>
    <scope>NUCLEOTIDE SEQUENCE [GENOMIC DNA]</scope>
</reference>
<reference key="2">
    <citation type="journal article" date="1997" name="Nature">
        <title>The nucleotide sequence of Saccharomyces cerevisiae chromosome XIII.</title>
        <authorList>
            <person name="Bowman S."/>
            <person name="Churcher C.M."/>
            <person name="Badcock K."/>
            <person name="Brown D."/>
            <person name="Chillingworth T."/>
            <person name="Connor R."/>
            <person name="Dedman K."/>
            <person name="Devlin K."/>
            <person name="Gentles S."/>
            <person name="Hamlin N."/>
            <person name="Hunt S."/>
            <person name="Jagels K."/>
            <person name="Lye G."/>
            <person name="Moule S."/>
            <person name="Odell C."/>
            <person name="Pearson D."/>
            <person name="Rajandream M.A."/>
            <person name="Rice P."/>
            <person name="Skelton J."/>
            <person name="Walsh S.V."/>
            <person name="Whitehead S."/>
            <person name="Barrell B.G."/>
        </authorList>
    </citation>
    <scope>NUCLEOTIDE SEQUENCE [LARGE SCALE GENOMIC DNA]</scope>
    <source>
        <strain>ATCC 204508 / S288c</strain>
    </source>
</reference>
<reference key="3">
    <citation type="journal article" date="2014" name="G3 (Bethesda)">
        <title>The reference genome sequence of Saccharomyces cerevisiae: Then and now.</title>
        <authorList>
            <person name="Engel S.R."/>
            <person name="Dietrich F.S."/>
            <person name="Fisk D.G."/>
            <person name="Binkley G."/>
            <person name="Balakrishnan R."/>
            <person name="Costanzo M.C."/>
            <person name="Dwight S.S."/>
            <person name="Hitz B.C."/>
            <person name="Karra K."/>
            <person name="Nash R.S."/>
            <person name="Weng S."/>
            <person name="Wong E.D."/>
            <person name="Lloyd P."/>
            <person name="Skrzypek M.S."/>
            <person name="Miyasato S.R."/>
            <person name="Simison M."/>
            <person name="Cherry J.M."/>
        </authorList>
    </citation>
    <scope>GENOME REANNOTATION</scope>
    <source>
        <strain>ATCC 204508 / S288c</strain>
    </source>
</reference>
<reference key="4">
    <citation type="journal article" date="2007" name="Genome Res.">
        <title>Approaching a complete repository of sequence-verified protein-encoding clones for Saccharomyces cerevisiae.</title>
        <authorList>
            <person name="Hu Y."/>
            <person name="Rolfs A."/>
            <person name="Bhullar B."/>
            <person name="Murthy T.V.S."/>
            <person name="Zhu C."/>
            <person name="Berger M.F."/>
            <person name="Camargo A.A."/>
            <person name="Kelley F."/>
            <person name="McCarron S."/>
            <person name="Jepson D."/>
            <person name="Richardson A."/>
            <person name="Raphael J."/>
            <person name="Moreira D."/>
            <person name="Taycher E."/>
            <person name="Zuo D."/>
            <person name="Mohr S."/>
            <person name="Kane M.F."/>
            <person name="Williamson J."/>
            <person name="Simpson A.J.G."/>
            <person name="Bulyk M.L."/>
            <person name="Harlow E."/>
            <person name="Marsischky G."/>
            <person name="Kolodner R.D."/>
            <person name="LaBaer J."/>
        </authorList>
    </citation>
    <scope>NUCLEOTIDE SEQUENCE [GENOMIC DNA]</scope>
    <source>
        <strain>ATCC 204508 / S288c</strain>
    </source>
</reference>
<reference key="5">
    <citation type="journal article" date="1984" name="Phytochemistry">
        <title>Inhibition of ergosterol biosynthesis of Saccharomyces cereviriae and Ustago maydis by tridemorph, fenpropimorph, and fenpropidin.</title>
        <authorList>
            <person name="Baloch R.I."/>
            <person name="Mercer E.I."/>
            <person name="Wiggins T.E."/>
            <person name="Baldwin B.C."/>
        </authorList>
    </citation>
    <scope>FUNCTION</scope>
    <scope>CATALYTIC ACTIVITY</scope>
    <scope>ACTIVITY REGULATION</scope>
</reference>
<reference key="6">
    <citation type="journal article" date="2000" name="FEBS Lett.">
        <title>Sterol metabolism and ERG2 gene regulation in the yeast Saccharomyces cerevisiae.</title>
        <authorList>
            <person name="Soustre I."/>
            <person name="Dupuy P.H."/>
            <person name="Silve S."/>
            <person name="Karst F."/>
            <person name="Loison G."/>
        </authorList>
    </citation>
    <scope>INDUCTION</scope>
</reference>
<reference key="7">
    <citation type="journal article" date="2003" name="Nature">
        <title>Global analysis of protein expression in yeast.</title>
        <authorList>
            <person name="Ghaemmaghami S."/>
            <person name="Huh W.-K."/>
            <person name="Bower K."/>
            <person name="Howson R.W."/>
            <person name="Belle A."/>
            <person name="Dephoure N."/>
            <person name="O'Shea E.K."/>
            <person name="Weissman J.S."/>
        </authorList>
    </citation>
    <scope>LEVEL OF PROTEIN EXPRESSION [LARGE SCALE ANALYSIS]</scope>
</reference>
<reference key="8">
    <citation type="journal article" date="2005" name="Mol. Cell. Proteomics">
        <title>The spatial organization of lipid synthesis in the yeast Saccharomyces cerevisiae derived from large scale green fluorescent protein tagging and high resolution microscopy.</title>
        <authorList>
            <person name="Natter K."/>
            <person name="Leitner P."/>
            <person name="Faschinger A."/>
            <person name="Wolinski H."/>
            <person name="McCraith S."/>
            <person name="Fields S."/>
            <person name="Kohlwein S.D."/>
        </authorList>
    </citation>
    <scope>SUBCELLULAR LOCATION</scope>
</reference>
<reference key="9">
    <citation type="journal article" date="2020" name="Genes (Basel)">
        <title>Regulation of ergosterol biosynthesis in Saccharomyces cerevisiae.</title>
        <authorList>
            <person name="Jorda T."/>
            <person name="Puig S."/>
        </authorList>
    </citation>
    <scope>REVIEW ON ERGOSTEROL BIOSYNTHESIS</scope>
</reference>
<reference key="10">
    <citation type="journal article" date="2023" name="Sci. Rep.">
        <title>Yeast lacking the sterol C-5 desaturase Erg3 are tolerant to the anti-inflammatory triterpenoid saponin escin.</title>
        <authorList>
            <person name="Johnston E.J."/>
            <person name="Tallis J."/>
            <person name="Cunningham-Oakes E."/>
            <person name="Moses T."/>
            <person name="Moore S.J."/>
            <person name="Hosking S."/>
            <person name="Rosser S.J."/>
        </authorList>
    </citation>
    <scope>DISRUPTION PHENOTYPE</scope>
</reference>